<evidence type="ECO:0000255" key="1">
    <source>
        <dbReference type="HAMAP-Rule" id="MF_01588"/>
    </source>
</evidence>
<keyword id="KW-0227">DNA damage</keyword>
<keyword id="KW-0234">DNA repair</keyword>
<keyword id="KW-0235">DNA replication</keyword>
<keyword id="KW-0436">Ligase</keyword>
<keyword id="KW-0460">Magnesium</keyword>
<keyword id="KW-0464">Manganese</keyword>
<keyword id="KW-0479">Metal-binding</keyword>
<keyword id="KW-0520">NAD</keyword>
<keyword id="KW-0862">Zinc</keyword>
<gene>
    <name evidence="1" type="primary">ligA</name>
    <name type="ordered locus">Ajs_2083</name>
</gene>
<feature type="chain" id="PRO_0000313100" description="DNA ligase">
    <location>
        <begin position="1"/>
        <end position="731"/>
    </location>
</feature>
<feature type="domain" description="BRCT" evidence="1">
    <location>
        <begin position="645"/>
        <end position="731"/>
    </location>
</feature>
<feature type="active site" description="N6-AMP-lysine intermediate" evidence="1">
    <location>
        <position position="135"/>
    </location>
</feature>
<feature type="binding site" evidence="1">
    <location>
        <begin position="47"/>
        <end position="51"/>
    </location>
    <ligand>
        <name>NAD(+)</name>
        <dbReference type="ChEBI" id="CHEBI:57540"/>
    </ligand>
</feature>
<feature type="binding site" evidence="1">
    <location>
        <begin position="96"/>
        <end position="97"/>
    </location>
    <ligand>
        <name>NAD(+)</name>
        <dbReference type="ChEBI" id="CHEBI:57540"/>
    </ligand>
</feature>
<feature type="binding site" evidence="1">
    <location>
        <position position="133"/>
    </location>
    <ligand>
        <name>NAD(+)</name>
        <dbReference type="ChEBI" id="CHEBI:57540"/>
    </ligand>
</feature>
<feature type="binding site" evidence="1">
    <location>
        <position position="156"/>
    </location>
    <ligand>
        <name>NAD(+)</name>
        <dbReference type="ChEBI" id="CHEBI:57540"/>
    </ligand>
</feature>
<feature type="binding site" evidence="1">
    <location>
        <position position="192"/>
    </location>
    <ligand>
        <name>NAD(+)</name>
        <dbReference type="ChEBI" id="CHEBI:57540"/>
    </ligand>
</feature>
<feature type="binding site" evidence="1">
    <location>
        <position position="313"/>
    </location>
    <ligand>
        <name>NAD(+)</name>
        <dbReference type="ChEBI" id="CHEBI:57540"/>
    </ligand>
</feature>
<feature type="binding site" evidence="1">
    <location>
        <position position="337"/>
    </location>
    <ligand>
        <name>NAD(+)</name>
        <dbReference type="ChEBI" id="CHEBI:57540"/>
    </ligand>
</feature>
<feature type="binding site" evidence="1">
    <location>
        <position position="462"/>
    </location>
    <ligand>
        <name>Zn(2+)</name>
        <dbReference type="ChEBI" id="CHEBI:29105"/>
    </ligand>
</feature>
<feature type="binding site" evidence="1">
    <location>
        <position position="465"/>
    </location>
    <ligand>
        <name>Zn(2+)</name>
        <dbReference type="ChEBI" id="CHEBI:29105"/>
    </ligand>
</feature>
<feature type="binding site" evidence="1">
    <location>
        <position position="480"/>
    </location>
    <ligand>
        <name>Zn(2+)</name>
        <dbReference type="ChEBI" id="CHEBI:29105"/>
    </ligand>
</feature>
<feature type="binding site" evidence="1">
    <location>
        <position position="486"/>
    </location>
    <ligand>
        <name>Zn(2+)</name>
        <dbReference type="ChEBI" id="CHEBI:29105"/>
    </ligand>
</feature>
<organism>
    <name type="scientific">Acidovorax sp. (strain JS42)</name>
    <dbReference type="NCBI Taxonomy" id="232721"/>
    <lineage>
        <taxon>Bacteria</taxon>
        <taxon>Pseudomonadati</taxon>
        <taxon>Pseudomonadota</taxon>
        <taxon>Betaproteobacteria</taxon>
        <taxon>Burkholderiales</taxon>
        <taxon>Comamonadaceae</taxon>
        <taxon>Acidovorax</taxon>
    </lineage>
</organism>
<accession>A1W7N4</accession>
<name>DNLJ_ACISJ</name>
<comment type="function">
    <text evidence="1">DNA ligase that catalyzes the formation of phosphodiester linkages between 5'-phosphoryl and 3'-hydroxyl groups in double-stranded DNA using NAD as a coenzyme and as the energy source for the reaction. It is essential for DNA replication and repair of damaged DNA.</text>
</comment>
<comment type="catalytic activity">
    <reaction evidence="1">
        <text>NAD(+) + (deoxyribonucleotide)n-3'-hydroxyl + 5'-phospho-(deoxyribonucleotide)m = (deoxyribonucleotide)n+m + AMP + beta-nicotinamide D-nucleotide.</text>
        <dbReference type="EC" id="6.5.1.2"/>
    </reaction>
</comment>
<comment type="cofactor">
    <cofactor evidence="1">
        <name>Mg(2+)</name>
        <dbReference type="ChEBI" id="CHEBI:18420"/>
    </cofactor>
    <cofactor evidence="1">
        <name>Mn(2+)</name>
        <dbReference type="ChEBI" id="CHEBI:29035"/>
    </cofactor>
</comment>
<comment type="similarity">
    <text evidence="1">Belongs to the NAD-dependent DNA ligase family. LigA subfamily.</text>
</comment>
<reference key="1">
    <citation type="submission" date="2006-12" db="EMBL/GenBank/DDBJ databases">
        <title>Complete sequence of chromosome 1 of Acidovorax sp. JS42.</title>
        <authorList>
            <person name="Copeland A."/>
            <person name="Lucas S."/>
            <person name="Lapidus A."/>
            <person name="Barry K."/>
            <person name="Detter J.C."/>
            <person name="Glavina del Rio T."/>
            <person name="Dalin E."/>
            <person name="Tice H."/>
            <person name="Pitluck S."/>
            <person name="Chertkov O."/>
            <person name="Brettin T."/>
            <person name="Bruce D."/>
            <person name="Han C."/>
            <person name="Tapia R."/>
            <person name="Gilna P."/>
            <person name="Schmutz J."/>
            <person name="Larimer F."/>
            <person name="Land M."/>
            <person name="Hauser L."/>
            <person name="Kyrpides N."/>
            <person name="Kim E."/>
            <person name="Stahl D."/>
            <person name="Richardson P."/>
        </authorList>
    </citation>
    <scope>NUCLEOTIDE SEQUENCE [LARGE SCALE GENOMIC DNA]</scope>
    <source>
        <strain>JS42</strain>
    </source>
</reference>
<dbReference type="EC" id="6.5.1.2" evidence="1"/>
<dbReference type="EMBL" id="CP000539">
    <property type="protein sequence ID" value="ABM42259.1"/>
    <property type="molecule type" value="Genomic_DNA"/>
</dbReference>
<dbReference type="SMR" id="A1W7N4"/>
<dbReference type="STRING" id="232721.Ajs_2083"/>
<dbReference type="KEGG" id="ajs:Ajs_2083"/>
<dbReference type="eggNOG" id="COG0272">
    <property type="taxonomic scope" value="Bacteria"/>
</dbReference>
<dbReference type="HOGENOM" id="CLU_007764_2_1_4"/>
<dbReference type="Proteomes" id="UP000000645">
    <property type="component" value="Chromosome"/>
</dbReference>
<dbReference type="GO" id="GO:0005829">
    <property type="term" value="C:cytosol"/>
    <property type="evidence" value="ECO:0007669"/>
    <property type="project" value="TreeGrafter"/>
</dbReference>
<dbReference type="GO" id="GO:0003677">
    <property type="term" value="F:DNA binding"/>
    <property type="evidence" value="ECO:0007669"/>
    <property type="project" value="InterPro"/>
</dbReference>
<dbReference type="GO" id="GO:0003911">
    <property type="term" value="F:DNA ligase (NAD+) activity"/>
    <property type="evidence" value="ECO:0007669"/>
    <property type="project" value="UniProtKB-UniRule"/>
</dbReference>
<dbReference type="GO" id="GO:0046872">
    <property type="term" value="F:metal ion binding"/>
    <property type="evidence" value="ECO:0007669"/>
    <property type="project" value="UniProtKB-KW"/>
</dbReference>
<dbReference type="GO" id="GO:0006281">
    <property type="term" value="P:DNA repair"/>
    <property type="evidence" value="ECO:0007669"/>
    <property type="project" value="UniProtKB-KW"/>
</dbReference>
<dbReference type="GO" id="GO:0006260">
    <property type="term" value="P:DNA replication"/>
    <property type="evidence" value="ECO:0007669"/>
    <property type="project" value="UniProtKB-KW"/>
</dbReference>
<dbReference type="CDD" id="cd00114">
    <property type="entry name" value="LIGANc"/>
    <property type="match status" value="1"/>
</dbReference>
<dbReference type="FunFam" id="1.10.150.20:FF:000006">
    <property type="entry name" value="DNA ligase"/>
    <property type="match status" value="1"/>
</dbReference>
<dbReference type="FunFam" id="1.10.150.20:FF:000007">
    <property type="entry name" value="DNA ligase"/>
    <property type="match status" value="1"/>
</dbReference>
<dbReference type="FunFam" id="1.10.287.610:FF:000002">
    <property type="entry name" value="DNA ligase"/>
    <property type="match status" value="1"/>
</dbReference>
<dbReference type="FunFam" id="2.40.50.140:FF:000012">
    <property type="entry name" value="DNA ligase"/>
    <property type="match status" value="1"/>
</dbReference>
<dbReference type="FunFam" id="3.30.470.30:FF:000001">
    <property type="entry name" value="DNA ligase"/>
    <property type="match status" value="1"/>
</dbReference>
<dbReference type="FunFam" id="3.40.50.10190:FF:000054">
    <property type="entry name" value="DNA ligase"/>
    <property type="match status" value="1"/>
</dbReference>
<dbReference type="Gene3D" id="6.20.10.30">
    <property type="match status" value="1"/>
</dbReference>
<dbReference type="Gene3D" id="1.10.150.20">
    <property type="entry name" value="5' to 3' exonuclease, C-terminal subdomain"/>
    <property type="match status" value="2"/>
</dbReference>
<dbReference type="Gene3D" id="3.40.50.10190">
    <property type="entry name" value="BRCT domain"/>
    <property type="match status" value="1"/>
</dbReference>
<dbReference type="Gene3D" id="3.30.470.30">
    <property type="entry name" value="DNA ligase/mRNA capping enzyme"/>
    <property type="match status" value="1"/>
</dbReference>
<dbReference type="Gene3D" id="1.10.287.610">
    <property type="entry name" value="Helix hairpin bin"/>
    <property type="match status" value="1"/>
</dbReference>
<dbReference type="Gene3D" id="2.40.50.140">
    <property type="entry name" value="Nucleic acid-binding proteins"/>
    <property type="match status" value="1"/>
</dbReference>
<dbReference type="HAMAP" id="MF_01588">
    <property type="entry name" value="DNA_ligase_A"/>
    <property type="match status" value="1"/>
</dbReference>
<dbReference type="InterPro" id="IPR001357">
    <property type="entry name" value="BRCT_dom"/>
</dbReference>
<dbReference type="InterPro" id="IPR036420">
    <property type="entry name" value="BRCT_dom_sf"/>
</dbReference>
<dbReference type="InterPro" id="IPR041663">
    <property type="entry name" value="DisA/LigA_HHH"/>
</dbReference>
<dbReference type="InterPro" id="IPR001679">
    <property type="entry name" value="DNA_ligase"/>
</dbReference>
<dbReference type="InterPro" id="IPR018239">
    <property type="entry name" value="DNA_ligase_AS"/>
</dbReference>
<dbReference type="InterPro" id="IPR033136">
    <property type="entry name" value="DNA_ligase_CS"/>
</dbReference>
<dbReference type="InterPro" id="IPR013839">
    <property type="entry name" value="DNAligase_adenylation"/>
</dbReference>
<dbReference type="InterPro" id="IPR013840">
    <property type="entry name" value="DNAligase_N"/>
</dbReference>
<dbReference type="InterPro" id="IPR003583">
    <property type="entry name" value="Hlx-hairpin-Hlx_DNA-bd_motif"/>
</dbReference>
<dbReference type="InterPro" id="IPR012340">
    <property type="entry name" value="NA-bd_OB-fold"/>
</dbReference>
<dbReference type="InterPro" id="IPR004150">
    <property type="entry name" value="NAD_DNA_ligase_OB"/>
</dbReference>
<dbReference type="InterPro" id="IPR010994">
    <property type="entry name" value="RuvA_2-like"/>
</dbReference>
<dbReference type="InterPro" id="IPR004149">
    <property type="entry name" value="Znf_DNAligase_C4"/>
</dbReference>
<dbReference type="NCBIfam" id="TIGR00575">
    <property type="entry name" value="dnlj"/>
    <property type="match status" value="1"/>
</dbReference>
<dbReference type="NCBIfam" id="NF005932">
    <property type="entry name" value="PRK07956.1"/>
    <property type="match status" value="1"/>
</dbReference>
<dbReference type="PANTHER" id="PTHR23389">
    <property type="entry name" value="CHROMOSOME TRANSMISSION FIDELITY FACTOR 18"/>
    <property type="match status" value="1"/>
</dbReference>
<dbReference type="PANTHER" id="PTHR23389:SF9">
    <property type="entry name" value="DNA LIGASE"/>
    <property type="match status" value="1"/>
</dbReference>
<dbReference type="Pfam" id="PF00533">
    <property type="entry name" value="BRCT"/>
    <property type="match status" value="1"/>
</dbReference>
<dbReference type="Pfam" id="PF01653">
    <property type="entry name" value="DNA_ligase_aden"/>
    <property type="match status" value="1"/>
</dbReference>
<dbReference type="Pfam" id="PF03120">
    <property type="entry name" value="DNA_ligase_OB"/>
    <property type="match status" value="1"/>
</dbReference>
<dbReference type="Pfam" id="PF03119">
    <property type="entry name" value="DNA_ligase_ZBD"/>
    <property type="match status" value="1"/>
</dbReference>
<dbReference type="Pfam" id="PF12826">
    <property type="entry name" value="HHH_2"/>
    <property type="match status" value="1"/>
</dbReference>
<dbReference type="Pfam" id="PF14520">
    <property type="entry name" value="HHH_5"/>
    <property type="match status" value="1"/>
</dbReference>
<dbReference type="PIRSF" id="PIRSF001604">
    <property type="entry name" value="LigA"/>
    <property type="match status" value="1"/>
</dbReference>
<dbReference type="SMART" id="SM00292">
    <property type="entry name" value="BRCT"/>
    <property type="match status" value="1"/>
</dbReference>
<dbReference type="SMART" id="SM00278">
    <property type="entry name" value="HhH1"/>
    <property type="match status" value="3"/>
</dbReference>
<dbReference type="SMART" id="SM00532">
    <property type="entry name" value="LIGANc"/>
    <property type="match status" value="1"/>
</dbReference>
<dbReference type="SUPFAM" id="SSF52113">
    <property type="entry name" value="BRCT domain"/>
    <property type="match status" value="1"/>
</dbReference>
<dbReference type="SUPFAM" id="SSF56091">
    <property type="entry name" value="DNA ligase/mRNA capping enzyme, catalytic domain"/>
    <property type="match status" value="1"/>
</dbReference>
<dbReference type="SUPFAM" id="SSF50249">
    <property type="entry name" value="Nucleic acid-binding proteins"/>
    <property type="match status" value="1"/>
</dbReference>
<dbReference type="SUPFAM" id="SSF47781">
    <property type="entry name" value="RuvA domain 2-like"/>
    <property type="match status" value="1"/>
</dbReference>
<dbReference type="PROSITE" id="PS50172">
    <property type="entry name" value="BRCT"/>
    <property type="match status" value="1"/>
</dbReference>
<dbReference type="PROSITE" id="PS01055">
    <property type="entry name" value="DNA_LIGASE_N1"/>
    <property type="match status" value="1"/>
</dbReference>
<dbReference type="PROSITE" id="PS01056">
    <property type="entry name" value="DNA_LIGASE_N2"/>
    <property type="match status" value="1"/>
</dbReference>
<protein>
    <recommendedName>
        <fullName evidence="1">DNA ligase</fullName>
        <ecNumber evidence="1">6.5.1.2</ecNumber>
    </recommendedName>
    <alternativeName>
        <fullName evidence="1">Polydeoxyribonucleotide synthase [NAD(+)]</fullName>
    </alternativeName>
</protein>
<sequence length="731" mass="78461">MTEQSDLFPAPAPKGSALVATKIKALREQLNRWAHEYYVQDTPSVPDAEYDRAFQQLQALEGAYPDLVTPDSPTQRVLGAVLDGLTPVRHRVPMLSIRTETDTEASGAQAFDARVRRELKLPPDAPPVEYVAEPKFDGLAMSLRYEGGRLVQAATRGDGEVGEDVTHNVRTIRQIPLSLPAGVPPVLEVRGEVYMRRADFDALNERQREKGDKTFVNPRNAAAGAVRQLDSGITAQRPLSFFAYGLGEVTPAAEGGPDFGTHFGMLQQLKEWGFPVAAQVQIAQGASELIAFHQRVGAERDALPYDIDGVVYKVNSLALQRQLGFVTREPRWAVAHKYPAQEMVTRVEGIDVQVGRTGKLTPVARLAPVFVGGVTVTNATLHNLFELRRKKVRVGDQVIVRRAGDVIPEVVGVVPAGAGLAVLAGSDALVDAASSADGTAPAQPLAGPRQPYVPNFRMPRQCPICGSAVVREPGEVNHRCSGGLFCPAQRKQAVLHFAQRRAMDIEGLGEKLVDQLVDGHVIRTLPDLYRLGLSSLAQLDRMAEKSAQNVLDALDKSKRTTLARFLFGLGIRHVGEATAKDLARHFGQLDAIMDAGVEQLLQVNDVGPVVAEAIHTFFAQPHNREVVEQLRACGVTWDESEPAAAATLPLAGMTVVLTGTLPTLGRDAAKDLLESAGAKVAGSVSKKTHYVVAGADAGSKLAKAQELGIPVLDEDGLHALLRGTPPNAGGA</sequence>
<proteinExistence type="inferred from homology"/>